<protein>
    <recommendedName>
        <fullName>Sensor protein PhoQ</fullName>
        <ecNumber>2.7.13.3</ecNumber>
        <ecNumber>3.1.3.-</ecNumber>
    </recommendedName>
    <alternativeName>
        <fullName>Sensor histidine protein kinase/phosphatase PhoQ</fullName>
    </alternativeName>
</protein>
<keyword id="KW-0067">ATP-binding</keyword>
<keyword id="KW-0997">Cell inner membrane</keyword>
<keyword id="KW-1003">Cell membrane</keyword>
<keyword id="KW-0378">Hydrolase</keyword>
<keyword id="KW-0418">Kinase</keyword>
<keyword id="KW-0460">Magnesium</keyword>
<keyword id="KW-0472">Membrane</keyword>
<keyword id="KW-0479">Metal-binding</keyword>
<keyword id="KW-0547">Nucleotide-binding</keyword>
<keyword id="KW-0597">Phosphoprotein</keyword>
<keyword id="KW-0904">Protein phosphatase</keyword>
<keyword id="KW-1185">Reference proteome</keyword>
<keyword id="KW-0808">Transferase</keyword>
<keyword id="KW-0812">Transmembrane</keyword>
<keyword id="KW-1133">Transmembrane helix</keyword>
<keyword id="KW-0902">Two-component regulatory system</keyword>
<organism>
    <name type="scientific">Escherichia coli O157:H7</name>
    <dbReference type="NCBI Taxonomy" id="83334"/>
    <lineage>
        <taxon>Bacteria</taxon>
        <taxon>Pseudomonadati</taxon>
        <taxon>Pseudomonadota</taxon>
        <taxon>Gammaproteobacteria</taxon>
        <taxon>Enterobacterales</taxon>
        <taxon>Enterobacteriaceae</taxon>
        <taxon>Escherichia</taxon>
    </lineage>
</organism>
<name>PHOQ_ECO57</name>
<comment type="function">
    <text evidence="1">Member of the two-component regulatory system PhoP/PhoQ involved in virulence, adaptation to low Mg(2+) environments and the control of acid resistance genes. In low periplasmic Mg(2+), PhoQ functions as a membrane-associated protein kinase that undergoes autophosphorylation and subsequently transfers the phosphate to PhoP, resulting in the expression of PhoP-activated genes (PAG) and repression of PhoP-repressed genes (PRG). In high periplasmic Mg(2+), acts as a protein phosphatase that dephosphorylates phospho-PhoP, which results in the repression of PG and may lead to expression of some PRG (By similarity).</text>
</comment>
<comment type="catalytic activity">
    <reaction>
        <text>ATP + protein L-histidine = ADP + protein N-phospho-L-histidine.</text>
        <dbReference type="EC" id="2.7.13.3"/>
    </reaction>
</comment>
<comment type="subunit">
    <text evidence="1">Homodimer.</text>
</comment>
<comment type="subcellular location">
    <subcellularLocation>
        <location evidence="1">Cell inner membrane</location>
        <topology evidence="1">Multi-pass membrane protein</topology>
    </subcellularLocation>
</comment>
<comment type="sequence caution" evidence="5">
    <conflict type="erroneous initiation">
        <sequence resource="EMBL-CDS" id="AAG55955"/>
    </conflict>
    <text>Truncated N-terminus.</text>
</comment>
<reference key="1">
    <citation type="journal article" date="2001" name="Nature">
        <title>Genome sequence of enterohaemorrhagic Escherichia coli O157:H7.</title>
        <authorList>
            <person name="Perna N.T."/>
            <person name="Plunkett G. III"/>
            <person name="Burland V."/>
            <person name="Mau B."/>
            <person name="Glasner J.D."/>
            <person name="Rose D.J."/>
            <person name="Mayhew G.F."/>
            <person name="Evans P.S."/>
            <person name="Gregor J."/>
            <person name="Kirkpatrick H.A."/>
            <person name="Posfai G."/>
            <person name="Hackett J."/>
            <person name="Klink S."/>
            <person name="Boutin A."/>
            <person name="Shao Y."/>
            <person name="Miller L."/>
            <person name="Grotbeck E.J."/>
            <person name="Davis N.W."/>
            <person name="Lim A."/>
            <person name="Dimalanta E.T."/>
            <person name="Potamousis K."/>
            <person name="Apodaca J."/>
            <person name="Anantharaman T.S."/>
            <person name="Lin J."/>
            <person name="Yen G."/>
            <person name="Schwartz D.C."/>
            <person name="Welch R.A."/>
            <person name="Blattner F.R."/>
        </authorList>
    </citation>
    <scope>NUCLEOTIDE SEQUENCE [LARGE SCALE GENOMIC DNA]</scope>
    <source>
        <strain>O157:H7 / EDL933 / ATCC 700927 / EHEC</strain>
    </source>
</reference>
<reference key="2">
    <citation type="journal article" date="2001" name="DNA Res.">
        <title>Complete genome sequence of enterohemorrhagic Escherichia coli O157:H7 and genomic comparison with a laboratory strain K-12.</title>
        <authorList>
            <person name="Hayashi T."/>
            <person name="Makino K."/>
            <person name="Ohnishi M."/>
            <person name="Kurokawa K."/>
            <person name="Ishii K."/>
            <person name="Yokoyama K."/>
            <person name="Han C.-G."/>
            <person name="Ohtsubo E."/>
            <person name="Nakayama K."/>
            <person name="Murata T."/>
            <person name="Tanaka M."/>
            <person name="Tobe T."/>
            <person name="Iida T."/>
            <person name="Takami H."/>
            <person name="Honda T."/>
            <person name="Sasakawa C."/>
            <person name="Ogasawara N."/>
            <person name="Yasunaga T."/>
            <person name="Kuhara S."/>
            <person name="Shiba T."/>
            <person name="Hattori M."/>
            <person name="Shinagawa H."/>
        </authorList>
    </citation>
    <scope>NUCLEOTIDE SEQUENCE [LARGE SCALE GENOMIC DNA]</scope>
    <source>
        <strain>O157:H7 / Sakai / RIMD 0509952 / EHEC</strain>
    </source>
</reference>
<sequence length="486" mass="55291">MKKLLHLFFPLSLRVRFLLATAAVVLVLSLAYGMVALIGYSVSFDKTTFRLLRGESNLFYTLAKWENNKLHVELPENIDKQSPTMTLIYDENGQLLWAQRDVPWLMKMIQPDWLKSNGFHEIEADVNDTSLLLSGDHSIQQQLQEVREDDDDAEMTHSVAVNVYPATSRMPKLTIVVVDTIPVELKSSYMVWSWFIYVLSANLLLVIPLLWVAAWWSLRPIEALAKEVRELEEHNRELLNPATTRELTSLVRNLNRLLKSERERYDKYRTTLTDLTHSLKTPLAVLQSTLRSLRSEKMSVSDAEPVMLEQISRISQQIGYYLHRASMHGGTLLSRELHPVAPLLDNLTSALNKVYQRKGVNISLDISPEISFVGEQNDFVEVMGNVLDNACKYCLEFVEISARQTDEHLYIVVEDDGPGIPLSKREVIFDRGQRVDTLRPGQGVGLAVAREITKQYEGKIVAGESMLGGARMEVIFGRQHSTPKDE</sequence>
<gene>
    <name type="primary">phoQ</name>
    <name type="ordered locus">Z1858</name>
    <name type="ordered locus">ECs1601</name>
</gene>
<evidence type="ECO:0000250" key="1"/>
<evidence type="ECO:0000255" key="2"/>
<evidence type="ECO:0000255" key="3">
    <source>
        <dbReference type="PROSITE-ProRule" id="PRU00102"/>
    </source>
</evidence>
<evidence type="ECO:0000255" key="4">
    <source>
        <dbReference type="PROSITE-ProRule" id="PRU00107"/>
    </source>
</evidence>
<evidence type="ECO:0000305" key="5"/>
<dbReference type="EC" id="2.7.13.3"/>
<dbReference type="EC" id="3.1.3.-"/>
<dbReference type="EMBL" id="AE005174">
    <property type="protein sequence ID" value="AAG55955.1"/>
    <property type="status" value="ALT_INIT"/>
    <property type="molecule type" value="Genomic_DNA"/>
</dbReference>
<dbReference type="EMBL" id="BA000007">
    <property type="protein sequence ID" value="BAB35024.1"/>
    <property type="molecule type" value="Genomic_DNA"/>
</dbReference>
<dbReference type="PIR" id="A99829">
    <property type="entry name" value="A99829"/>
</dbReference>
<dbReference type="PIR" id="G85686">
    <property type="entry name" value="G85686"/>
</dbReference>
<dbReference type="RefSeq" id="NP_309628.1">
    <property type="nucleotide sequence ID" value="NC_002695.1"/>
</dbReference>
<dbReference type="SMR" id="Q8X739"/>
<dbReference type="STRING" id="155864.Z1858"/>
<dbReference type="GeneID" id="913290"/>
<dbReference type="KEGG" id="ece:Z1858"/>
<dbReference type="KEGG" id="ecs:ECs_1601"/>
<dbReference type="PATRIC" id="fig|386585.9.peg.1701"/>
<dbReference type="eggNOG" id="COG2205">
    <property type="taxonomic scope" value="Bacteria"/>
</dbReference>
<dbReference type="HOGENOM" id="CLU_000445_42_0_6"/>
<dbReference type="Proteomes" id="UP000000558">
    <property type="component" value="Chromosome"/>
</dbReference>
<dbReference type="Proteomes" id="UP000002519">
    <property type="component" value="Chromosome"/>
</dbReference>
<dbReference type="GO" id="GO:0005886">
    <property type="term" value="C:plasma membrane"/>
    <property type="evidence" value="ECO:0007669"/>
    <property type="project" value="UniProtKB-SubCell"/>
</dbReference>
<dbReference type="GO" id="GO:0005524">
    <property type="term" value="F:ATP binding"/>
    <property type="evidence" value="ECO:0007669"/>
    <property type="project" value="UniProtKB-KW"/>
</dbReference>
<dbReference type="GO" id="GO:0046872">
    <property type="term" value="F:metal ion binding"/>
    <property type="evidence" value="ECO:0007669"/>
    <property type="project" value="UniProtKB-KW"/>
</dbReference>
<dbReference type="GO" id="GO:0004721">
    <property type="term" value="F:phosphoprotein phosphatase activity"/>
    <property type="evidence" value="ECO:0007669"/>
    <property type="project" value="UniProtKB-KW"/>
</dbReference>
<dbReference type="GO" id="GO:0000155">
    <property type="term" value="F:phosphorelay sensor kinase activity"/>
    <property type="evidence" value="ECO:0007669"/>
    <property type="project" value="InterPro"/>
</dbReference>
<dbReference type="CDD" id="cd16954">
    <property type="entry name" value="HATPase_PhoQ-like"/>
    <property type="match status" value="1"/>
</dbReference>
<dbReference type="FunFam" id="1.10.287.130:FF:000013">
    <property type="entry name" value="Sensor histidine kinase PhoQ"/>
    <property type="match status" value="1"/>
</dbReference>
<dbReference type="FunFam" id="3.30.450.140:FF:000001">
    <property type="entry name" value="Virulence sensor histidine kinase PhoQ"/>
    <property type="match status" value="1"/>
</dbReference>
<dbReference type="FunFam" id="3.30.565.10:FF:000019">
    <property type="entry name" value="Virulence sensor histidine kinase PhoQ"/>
    <property type="match status" value="1"/>
</dbReference>
<dbReference type="Gene3D" id="1.10.287.130">
    <property type="match status" value="1"/>
</dbReference>
<dbReference type="Gene3D" id="3.30.450.140">
    <property type="match status" value="1"/>
</dbReference>
<dbReference type="Gene3D" id="3.30.565.10">
    <property type="entry name" value="Histidine kinase-like ATPase, C-terminal domain"/>
    <property type="match status" value="1"/>
</dbReference>
<dbReference type="InterPro" id="IPR003660">
    <property type="entry name" value="HAMP_dom"/>
</dbReference>
<dbReference type="InterPro" id="IPR036890">
    <property type="entry name" value="HATPase_C_sf"/>
</dbReference>
<dbReference type="InterPro" id="IPR005467">
    <property type="entry name" value="His_kinase_dom"/>
</dbReference>
<dbReference type="InterPro" id="IPR036097">
    <property type="entry name" value="HisK_dim/P_sf"/>
</dbReference>
<dbReference type="InterPro" id="IPR015014">
    <property type="entry name" value="PhoQ_Sensor"/>
</dbReference>
<dbReference type="InterPro" id="IPR038429">
    <property type="entry name" value="PhoQ_Sensor_sf"/>
</dbReference>
<dbReference type="InterPro" id="IPR004358">
    <property type="entry name" value="Sig_transdc_His_kin-like_C"/>
</dbReference>
<dbReference type="InterPro" id="IPR050428">
    <property type="entry name" value="TCS_sensor_his_kinase"/>
</dbReference>
<dbReference type="NCBIfam" id="NF008077">
    <property type="entry name" value="PRK10815.1"/>
    <property type="match status" value="1"/>
</dbReference>
<dbReference type="PANTHER" id="PTHR45436">
    <property type="entry name" value="SENSOR HISTIDINE KINASE YKOH"/>
    <property type="match status" value="1"/>
</dbReference>
<dbReference type="PANTHER" id="PTHR45436:SF4">
    <property type="entry name" value="SENSOR PROTEIN PHOQ"/>
    <property type="match status" value="1"/>
</dbReference>
<dbReference type="Pfam" id="PF02518">
    <property type="entry name" value="HATPase_c"/>
    <property type="match status" value="1"/>
</dbReference>
<dbReference type="Pfam" id="PF08918">
    <property type="entry name" value="PhoQ_Sensor"/>
    <property type="match status" value="1"/>
</dbReference>
<dbReference type="PRINTS" id="PR00344">
    <property type="entry name" value="BCTRLSENSOR"/>
</dbReference>
<dbReference type="SMART" id="SM00387">
    <property type="entry name" value="HATPase_c"/>
    <property type="match status" value="1"/>
</dbReference>
<dbReference type="SUPFAM" id="SSF55874">
    <property type="entry name" value="ATPase domain of HSP90 chaperone/DNA topoisomerase II/histidine kinase"/>
    <property type="match status" value="1"/>
</dbReference>
<dbReference type="SUPFAM" id="SSF47384">
    <property type="entry name" value="Homodimeric domain of signal transducing histidine kinase"/>
    <property type="match status" value="1"/>
</dbReference>
<dbReference type="PROSITE" id="PS50885">
    <property type="entry name" value="HAMP"/>
    <property type="match status" value="1"/>
</dbReference>
<dbReference type="PROSITE" id="PS50109">
    <property type="entry name" value="HIS_KIN"/>
    <property type="match status" value="1"/>
</dbReference>
<feature type="chain" id="PRO_0000074838" description="Sensor protein PhoQ">
    <location>
        <begin position="1"/>
        <end position="486"/>
    </location>
</feature>
<feature type="topological domain" description="Cytoplasmic" evidence="2">
    <location>
        <begin position="1"/>
        <end position="16"/>
    </location>
</feature>
<feature type="transmembrane region" description="Helical" evidence="2">
    <location>
        <begin position="17"/>
        <end position="37"/>
    </location>
</feature>
<feature type="topological domain" description="Periplasmic" evidence="2">
    <location>
        <begin position="38"/>
        <end position="194"/>
    </location>
</feature>
<feature type="transmembrane region" description="Helical" evidence="2">
    <location>
        <begin position="195"/>
        <end position="215"/>
    </location>
</feature>
<feature type="topological domain" description="Cytoplasmic" evidence="2">
    <location>
        <begin position="216"/>
        <end position="486"/>
    </location>
</feature>
<feature type="domain" description="HAMP" evidence="3">
    <location>
        <begin position="215"/>
        <end position="266"/>
    </location>
</feature>
<feature type="domain" description="Histidine kinase" evidence="4">
    <location>
        <begin position="274"/>
        <end position="480"/>
    </location>
</feature>
<feature type="binding site" evidence="1">
    <location>
        <position position="151"/>
    </location>
    <ligand>
        <name>a divalent metal cation</name>
        <dbReference type="ChEBI" id="CHEBI:60240"/>
    </ligand>
</feature>
<feature type="binding site" evidence="1">
    <location>
        <position position="152"/>
    </location>
    <ligand>
        <name>a divalent metal cation</name>
        <dbReference type="ChEBI" id="CHEBI:60240"/>
    </ligand>
</feature>
<feature type="binding site" evidence="1">
    <location>
        <begin position="385"/>
        <end position="393"/>
    </location>
    <ligand>
        <name>ATP</name>
        <dbReference type="ChEBI" id="CHEBI:30616"/>
    </ligand>
</feature>
<feature type="binding site" evidence="1">
    <location>
        <position position="385"/>
    </location>
    <ligand>
        <name>Mg(2+)</name>
        <dbReference type="ChEBI" id="CHEBI:18420"/>
    </ligand>
</feature>
<feature type="binding site" evidence="1">
    <location>
        <begin position="415"/>
        <end position="420"/>
    </location>
    <ligand>
        <name>ATP</name>
        <dbReference type="ChEBI" id="CHEBI:30616"/>
    </ligand>
</feature>
<feature type="binding site" evidence="1">
    <location>
        <begin position="434"/>
        <end position="446"/>
    </location>
    <ligand>
        <name>ATP</name>
        <dbReference type="ChEBI" id="CHEBI:30616"/>
    </ligand>
</feature>
<feature type="binding site" evidence="1">
    <location>
        <position position="442"/>
    </location>
    <ligand>
        <name>Mg(2+)</name>
        <dbReference type="ChEBI" id="CHEBI:18420"/>
    </ligand>
</feature>
<feature type="site" description="Plays a critical role in the switching between kinase and phosphatase states" evidence="1">
    <location>
        <position position="202"/>
    </location>
</feature>
<feature type="modified residue" description="Phosphohistidine; by autocatalysis" evidence="4">
    <location>
        <position position="277"/>
    </location>
</feature>
<proteinExistence type="inferred from homology"/>
<accession>Q8X739</accession>
<accession>Q7AF16</accession>